<name>PYRF_CAUSK</name>
<accession>B0T410</accession>
<feature type="chain" id="PRO_1000085487" description="Orotidine 5'-phosphate decarboxylase">
    <location>
        <begin position="1"/>
        <end position="229"/>
    </location>
</feature>
<feature type="active site" description="Proton donor" evidence="1">
    <location>
        <position position="63"/>
    </location>
</feature>
<feature type="binding site" evidence="1">
    <location>
        <position position="12"/>
    </location>
    <ligand>
        <name>substrate</name>
    </ligand>
</feature>
<feature type="binding site" evidence="1">
    <location>
        <position position="34"/>
    </location>
    <ligand>
        <name>substrate</name>
    </ligand>
</feature>
<feature type="binding site" evidence="1">
    <location>
        <begin position="61"/>
        <end position="70"/>
    </location>
    <ligand>
        <name>substrate</name>
    </ligand>
</feature>
<feature type="binding site" evidence="1">
    <location>
        <position position="116"/>
    </location>
    <ligand>
        <name>substrate</name>
    </ligand>
</feature>
<feature type="binding site" evidence="1">
    <location>
        <position position="177"/>
    </location>
    <ligand>
        <name>substrate</name>
    </ligand>
</feature>
<feature type="binding site" evidence="1">
    <location>
        <position position="186"/>
    </location>
    <ligand>
        <name>substrate</name>
    </ligand>
</feature>
<feature type="binding site" evidence="1">
    <location>
        <position position="206"/>
    </location>
    <ligand>
        <name>substrate</name>
    </ligand>
</feature>
<feature type="binding site" evidence="1">
    <location>
        <position position="207"/>
    </location>
    <ligand>
        <name>substrate</name>
    </ligand>
</feature>
<reference key="1">
    <citation type="submission" date="2008-01" db="EMBL/GenBank/DDBJ databases">
        <title>Complete sequence of chromosome of Caulobacter sp. K31.</title>
        <authorList>
            <consortium name="US DOE Joint Genome Institute"/>
            <person name="Copeland A."/>
            <person name="Lucas S."/>
            <person name="Lapidus A."/>
            <person name="Barry K."/>
            <person name="Glavina del Rio T."/>
            <person name="Dalin E."/>
            <person name="Tice H."/>
            <person name="Pitluck S."/>
            <person name="Bruce D."/>
            <person name="Goodwin L."/>
            <person name="Thompson L.S."/>
            <person name="Brettin T."/>
            <person name="Detter J.C."/>
            <person name="Han C."/>
            <person name="Schmutz J."/>
            <person name="Larimer F."/>
            <person name="Land M."/>
            <person name="Hauser L."/>
            <person name="Kyrpides N."/>
            <person name="Kim E."/>
            <person name="Stephens C."/>
            <person name="Richardson P."/>
        </authorList>
    </citation>
    <scope>NUCLEOTIDE SEQUENCE [LARGE SCALE GENOMIC DNA]</scope>
    <source>
        <strain>K31</strain>
    </source>
</reference>
<gene>
    <name evidence="1" type="primary">pyrF</name>
    <name type="ordered locus">Caul_4774</name>
</gene>
<proteinExistence type="inferred from homology"/>
<keyword id="KW-0210">Decarboxylase</keyword>
<keyword id="KW-0456">Lyase</keyword>
<keyword id="KW-0665">Pyrimidine biosynthesis</keyword>
<evidence type="ECO:0000255" key="1">
    <source>
        <dbReference type="HAMAP-Rule" id="MF_01200"/>
    </source>
</evidence>
<sequence length="229" mass="23907">MSADPRLILPLDLSSVSEARAMVETLGDAVSFYKIGLELLATDGMALARQLKGEGKQIFLDWKLHDIGATVERSARVLAGAGCDLLTVHAEPQVMAAAVKAKGGSDLKILAVTVLTSLTDADLIELGYAFSARDLVARRIRQAIEAGVDGVVSSPQEAALAREIAGPDFLVVTPGVRPFWSAKNDQARAATPADALKAGASHLVCGRPITAANDPREAALKVVGEMAGL</sequence>
<comment type="function">
    <text evidence="1">Catalyzes the decarboxylation of orotidine 5'-monophosphate (OMP) to uridine 5'-monophosphate (UMP).</text>
</comment>
<comment type="catalytic activity">
    <reaction evidence="1">
        <text>orotidine 5'-phosphate + H(+) = UMP + CO2</text>
        <dbReference type="Rhea" id="RHEA:11596"/>
        <dbReference type="ChEBI" id="CHEBI:15378"/>
        <dbReference type="ChEBI" id="CHEBI:16526"/>
        <dbReference type="ChEBI" id="CHEBI:57538"/>
        <dbReference type="ChEBI" id="CHEBI:57865"/>
        <dbReference type="EC" id="4.1.1.23"/>
    </reaction>
</comment>
<comment type="pathway">
    <text evidence="1">Pyrimidine metabolism; UMP biosynthesis via de novo pathway; UMP from orotate: step 2/2.</text>
</comment>
<comment type="subunit">
    <text evidence="1">Homodimer.</text>
</comment>
<comment type="similarity">
    <text evidence="1">Belongs to the OMP decarboxylase family. Type 1 subfamily.</text>
</comment>
<organism>
    <name type="scientific">Caulobacter sp. (strain K31)</name>
    <dbReference type="NCBI Taxonomy" id="366602"/>
    <lineage>
        <taxon>Bacteria</taxon>
        <taxon>Pseudomonadati</taxon>
        <taxon>Pseudomonadota</taxon>
        <taxon>Alphaproteobacteria</taxon>
        <taxon>Caulobacterales</taxon>
        <taxon>Caulobacteraceae</taxon>
        <taxon>Caulobacter</taxon>
    </lineage>
</organism>
<dbReference type="EC" id="4.1.1.23" evidence="1"/>
<dbReference type="EMBL" id="CP000927">
    <property type="protein sequence ID" value="ABZ73894.1"/>
    <property type="molecule type" value="Genomic_DNA"/>
</dbReference>
<dbReference type="SMR" id="B0T410"/>
<dbReference type="STRING" id="366602.Caul_4774"/>
<dbReference type="KEGG" id="cak:Caul_4774"/>
<dbReference type="eggNOG" id="COG0284">
    <property type="taxonomic scope" value="Bacteria"/>
</dbReference>
<dbReference type="HOGENOM" id="CLU_067069_1_0_5"/>
<dbReference type="OrthoDB" id="9806203at2"/>
<dbReference type="UniPathway" id="UPA00070">
    <property type="reaction ID" value="UER00120"/>
</dbReference>
<dbReference type="GO" id="GO:0005829">
    <property type="term" value="C:cytosol"/>
    <property type="evidence" value="ECO:0007669"/>
    <property type="project" value="TreeGrafter"/>
</dbReference>
<dbReference type="GO" id="GO:0004590">
    <property type="term" value="F:orotidine-5'-phosphate decarboxylase activity"/>
    <property type="evidence" value="ECO:0007669"/>
    <property type="project" value="UniProtKB-UniRule"/>
</dbReference>
<dbReference type="GO" id="GO:0006207">
    <property type="term" value="P:'de novo' pyrimidine nucleobase biosynthetic process"/>
    <property type="evidence" value="ECO:0007669"/>
    <property type="project" value="InterPro"/>
</dbReference>
<dbReference type="GO" id="GO:0044205">
    <property type="term" value="P:'de novo' UMP biosynthetic process"/>
    <property type="evidence" value="ECO:0007669"/>
    <property type="project" value="UniProtKB-UniRule"/>
</dbReference>
<dbReference type="CDD" id="cd04725">
    <property type="entry name" value="OMP_decarboxylase_like"/>
    <property type="match status" value="1"/>
</dbReference>
<dbReference type="Gene3D" id="3.20.20.70">
    <property type="entry name" value="Aldolase class I"/>
    <property type="match status" value="1"/>
</dbReference>
<dbReference type="HAMAP" id="MF_01200_B">
    <property type="entry name" value="OMPdecase_type1_B"/>
    <property type="match status" value="1"/>
</dbReference>
<dbReference type="InterPro" id="IPR013785">
    <property type="entry name" value="Aldolase_TIM"/>
</dbReference>
<dbReference type="InterPro" id="IPR014732">
    <property type="entry name" value="OMPdecase"/>
</dbReference>
<dbReference type="InterPro" id="IPR018089">
    <property type="entry name" value="OMPdecase_AS"/>
</dbReference>
<dbReference type="InterPro" id="IPR047596">
    <property type="entry name" value="OMPdecase_bac"/>
</dbReference>
<dbReference type="InterPro" id="IPR001754">
    <property type="entry name" value="OMPdeCOase_dom"/>
</dbReference>
<dbReference type="InterPro" id="IPR011060">
    <property type="entry name" value="RibuloseP-bd_barrel"/>
</dbReference>
<dbReference type="NCBIfam" id="NF001273">
    <property type="entry name" value="PRK00230.1"/>
    <property type="match status" value="1"/>
</dbReference>
<dbReference type="NCBIfam" id="TIGR01740">
    <property type="entry name" value="pyrF"/>
    <property type="match status" value="1"/>
</dbReference>
<dbReference type="PANTHER" id="PTHR32119">
    <property type="entry name" value="OROTIDINE 5'-PHOSPHATE DECARBOXYLASE"/>
    <property type="match status" value="1"/>
</dbReference>
<dbReference type="PANTHER" id="PTHR32119:SF2">
    <property type="entry name" value="OROTIDINE 5'-PHOSPHATE DECARBOXYLASE"/>
    <property type="match status" value="1"/>
</dbReference>
<dbReference type="Pfam" id="PF00215">
    <property type="entry name" value="OMPdecase"/>
    <property type="match status" value="1"/>
</dbReference>
<dbReference type="SMART" id="SM00934">
    <property type="entry name" value="OMPdecase"/>
    <property type="match status" value="1"/>
</dbReference>
<dbReference type="SUPFAM" id="SSF51366">
    <property type="entry name" value="Ribulose-phoshate binding barrel"/>
    <property type="match status" value="1"/>
</dbReference>
<dbReference type="PROSITE" id="PS00156">
    <property type="entry name" value="OMPDECASE"/>
    <property type="match status" value="1"/>
</dbReference>
<protein>
    <recommendedName>
        <fullName evidence="1">Orotidine 5'-phosphate decarboxylase</fullName>
        <ecNumber evidence="1">4.1.1.23</ecNumber>
    </recommendedName>
    <alternativeName>
        <fullName evidence="1">OMP decarboxylase</fullName>
        <shortName evidence="1">OMPDCase</shortName>
        <shortName evidence="1">OMPdecase</shortName>
    </alternativeName>
</protein>